<gene>
    <name evidence="1" type="primary">tpiA</name>
    <name type="ordered locus">Reut_A0959</name>
</gene>
<protein>
    <recommendedName>
        <fullName evidence="1">Triosephosphate isomerase</fullName>
        <shortName evidence="1">TIM</shortName>
        <shortName evidence="1">TPI</shortName>
        <ecNumber evidence="1">5.3.1.1</ecNumber>
    </recommendedName>
    <alternativeName>
        <fullName evidence="1">Triose-phosphate isomerase</fullName>
    </alternativeName>
</protein>
<organism>
    <name type="scientific">Cupriavidus pinatubonensis (strain JMP 134 / LMG 1197)</name>
    <name type="common">Cupriavidus necator (strain JMP 134)</name>
    <dbReference type="NCBI Taxonomy" id="264198"/>
    <lineage>
        <taxon>Bacteria</taxon>
        <taxon>Pseudomonadati</taxon>
        <taxon>Pseudomonadota</taxon>
        <taxon>Betaproteobacteria</taxon>
        <taxon>Burkholderiales</taxon>
        <taxon>Burkholderiaceae</taxon>
        <taxon>Cupriavidus</taxon>
    </lineage>
</organism>
<name>TPIS_CUPPJ</name>
<comment type="function">
    <text evidence="1">Involved in the gluconeogenesis. Catalyzes stereospecifically the conversion of dihydroxyacetone phosphate (DHAP) to D-glyceraldehyde-3-phosphate (G3P).</text>
</comment>
<comment type="catalytic activity">
    <reaction evidence="1">
        <text>D-glyceraldehyde 3-phosphate = dihydroxyacetone phosphate</text>
        <dbReference type="Rhea" id="RHEA:18585"/>
        <dbReference type="ChEBI" id="CHEBI:57642"/>
        <dbReference type="ChEBI" id="CHEBI:59776"/>
        <dbReference type="EC" id="5.3.1.1"/>
    </reaction>
</comment>
<comment type="pathway">
    <text evidence="1">Carbohydrate biosynthesis; gluconeogenesis.</text>
</comment>
<comment type="pathway">
    <text evidence="1">Carbohydrate degradation; glycolysis; D-glyceraldehyde 3-phosphate from glycerone phosphate: step 1/1.</text>
</comment>
<comment type="subunit">
    <text evidence="1">Homodimer.</text>
</comment>
<comment type="subcellular location">
    <subcellularLocation>
        <location evidence="1">Cytoplasm</location>
    </subcellularLocation>
</comment>
<comment type="similarity">
    <text evidence="1">Belongs to the triosephosphate isomerase family.</text>
</comment>
<evidence type="ECO:0000255" key="1">
    <source>
        <dbReference type="HAMAP-Rule" id="MF_00147"/>
    </source>
</evidence>
<feature type="chain" id="PRO_0000307543" description="Triosephosphate isomerase">
    <location>
        <begin position="1"/>
        <end position="245"/>
    </location>
</feature>
<feature type="active site" description="Electrophile" evidence="1">
    <location>
        <position position="92"/>
    </location>
</feature>
<feature type="active site" description="Proton acceptor" evidence="1">
    <location>
        <position position="164"/>
    </location>
</feature>
<feature type="binding site" evidence="1">
    <location>
        <begin position="9"/>
        <end position="11"/>
    </location>
    <ligand>
        <name>substrate</name>
    </ligand>
</feature>
<feature type="binding site" evidence="1">
    <location>
        <position position="170"/>
    </location>
    <ligand>
        <name>substrate</name>
    </ligand>
</feature>
<feature type="binding site" evidence="1">
    <location>
        <position position="209"/>
    </location>
    <ligand>
        <name>substrate</name>
    </ligand>
</feature>
<feature type="binding site" evidence="1">
    <location>
        <begin position="230"/>
        <end position="231"/>
    </location>
    <ligand>
        <name>substrate</name>
    </ligand>
</feature>
<reference key="1">
    <citation type="journal article" date="2010" name="PLoS ONE">
        <title>The complete multipartite genome sequence of Cupriavidus necator JMP134, a versatile pollutant degrader.</title>
        <authorList>
            <person name="Lykidis A."/>
            <person name="Perez-Pantoja D."/>
            <person name="Ledger T."/>
            <person name="Mavromatis K."/>
            <person name="Anderson I.J."/>
            <person name="Ivanova N.N."/>
            <person name="Hooper S.D."/>
            <person name="Lapidus A."/>
            <person name="Lucas S."/>
            <person name="Gonzalez B."/>
            <person name="Kyrpides N.C."/>
        </authorList>
    </citation>
    <scope>NUCLEOTIDE SEQUENCE [LARGE SCALE GENOMIC DNA]</scope>
    <source>
        <strain>JMP134 / LMG 1197</strain>
    </source>
</reference>
<sequence length="245" mass="25584">MRQKLVIGNWKMHGSLAANAALLEGIKAAPARARLAVCAPFPYLAQCQALLNGSQVAWGAQDVSAEARGAFTGEVAASMLGEFGCTYALVGHSERRTYHGESDAVVAAKALRALEFGIIPVICVGETLAQREAGETEVVVGRQLQAALDALSVEQLGRVVLAYEPVWAIGTGKTASSEQAQAVHAFLRAEVRERDAGVADRMAILYGGSVKPDNAAELFSMSDIDGGLIGGASLKSEDFLAIGNA</sequence>
<dbReference type="EC" id="5.3.1.1" evidence="1"/>
<dbReference type="EMBL" id="CP000090">
    <property type="protein sequence ID" value="AAZ60338.1"/>
    <property type="molecule type" value="Genomic_DNA"/>
</dbReference>
<dbReference type="SMR" id="Q473U5"/>
<dbReference type="STRING" id="264198.Reut_A0959"/>
<dbReference type="KEGG" id="reu:Reut_A0959"/>
<dbReference type="eggNOG" id="COG0149">
    <property type="taxonomic scope" value="Bacteria"/>
</dbReference>
<dbReference type="HOGENOM" id="CLU_024251_2_1_4"/>
<dbReference type="OrthoDB" id="9809429at2"/>
<dbReference type="UniPathway" id="UPA00109">
    <property type="reaction ID" value="UER00189"/>
</dbReference>
<dbReference type="UniPathway" id="UPA00138"/>
<dbReference type="GO" id="GO:0005829">
    <property type="term" value="C:cytosol"/>
    <property type="evidence" value="ECO:0007669"/>
    <property type="project" value="TreeGrafter"/>
</dbReference>
<dbReference type="GO" id="GO:0004807">
    <property type="term" value="F:triose-phosphate isomerase activity"/>
    <property type="evidence" value="ECO:0007669"/>
    <property type="project" value="UniProtKB-UniRule"/>
</dbReference>
<dbReference type="GO" id="GO:0006094">
    <property type="term" value="P:gluconeogenesis"/>
    <property type="evidence" value="ECO:0007669"/>
    <property type="project" value="UniProtKB-UniRule"/>
</dbReference>
<dbReference type="GO" id="GO:0046166">
    <property type="term" value="P:glyceraldehyde-3-phosphate biosynthetic process"/>
    <property type="evidence" value="ECO:0007669"/>
    <property type="project" value="TreeGrafter"/>
</dbReference>
<dbReference type="GO" id="GO:0019563">
    <property type="term" value="P:glycerol catabolic process"/>
    <property type="evidence" value="ECO:0007669"/>
    <property type="project" value="TreeGrafter"/>
</dbReference>
<dbReference type="GO" id="GO:0006096">
    <property type="term" value="P:glycolytic process"/>
    <property type="evidence" value="ECO:0007669"/>
    <property type="project" value="UniProtKB-UniRule"/>
</dbReference>
<dbReference type="CDD" id="cd00311">
    <property type="entry name" value="TIM"/>
    <property type="match status" value="1"/>
</dbReference>
<dbReference type="FunFam" id="3.20.20.70:FF:000016">
    <property type="entry name" value="Triosephosphate isomerase"/>
    <property type="match status" value="1"/>
</dbReference>
<dbReference type="Gene3D" id="3.20.20.70">
    <property type="entry name" value="Aldolase class I"/>
    <property type="match status" value="1"/>
</dbReference>
<dbReference type="HAMAP" id="MF_00147_B">
    <property type="entry name" value="TIM_B"/>
    <property type="match status" value="1"/>
</dbReference>
<dbReference type="InterPro" id="IPR013785">
    <property type="entry name" value="Aldolase_TIM"/>
</dbReference>
<dbReference type="InterPro" id="IPR035990">
    <property type="entry name" value="TIM_sf"/>
</dbReference>
<dbReference type="InterPro" id="IPR022896">
    <property type="entry name" value="TrioseP_Isoase_bac/euk"/>
</dbReference>
<dbReference type="InterPro" id="IPR000652">
    <property type="entry name" value="Triosephosphate_isomerase"/>
</dbReference>
<dbReference type="InterPro" id="IPR020861">
    <property type="entry name" value="Triosephosphate_isomerase_AS"/>
</dbReference>
<dbReference type="NCBIfam" id="TIGR00419">
    <property type="entry name" value="tim"/>
    <property type="match status" value="1"/>
</dbReference>
<dbReference type="PANTHER" id="PTHR21139">
    <property type="entry name" value="TRIOSEPHOSPHATE ISOMERASE"/>
    <property type="match status" value="1"/>
</dbReference>
<dbReference type="PANTHER" id="PTHR21139:SF42">
    <property type="entry name" value="TRIOSEPHOSPHATE ISOMERASE"/>
    <property type="match status" value="1"/>
</dbReference>
<dbReference type="Pfam" id="PF00121">
    <property type="entry name" value="TIM"/>
    <property type="match status" value="1"/>
</dbReference>
<dbReference type="SUPFAM" id="SSF51351">
    <property type="entry name" value="Triosephosphate isomerase (TIM)"/>
    <property type="match status" value="1"/>
</dbReference>
<dbReference type="PROSITE" id="PS00171">
    <property type="entry name" value="TIM_1"/>
    <property type="match status" value="1"/>
</dbReference>
<dbReference type="PROSITE" id="PS51440">
    <property type="entry name" value="TIM_2"/>
    <property type="match status" value="1"/>
</dbReference>
<accession>Q473U5</accession>
<keyword id="KW-0963">Cytoplasm</keyword>
<keyword id="KW-0312">Gluconeogenesis</keyword>
<keyword id="KW-0324">Glycolysis</keyword>
<keyword id="KW-0413">Isomerase</keyword>
<proteinExistence type="inferred from homology"/>